<proteinExistence type="inferred from homology"/>
<feature type="chain" id="PRO_0000140730" description="3-dehydroquinate synthase">
    <location>
        <begin position="1"/>
        <end position="356"/>
    </location>
</feature>
<feature type="binding site" evidence="1">
    <location>
        <begin position="106"/>
        <end position="110"/>
    </location>
    <ligand>
        <name>NAD(+)</name>
        <dbReference type="ChEBI" id="CHEBI:57540"/>
    </ligand>
</feature>
<feature type="binding site" evidence="1">
    <location>
        <begin position="130"/>
        <end position="131"/>
    </location>
    <ligand>
        <name>NAD(+)</name>
        <dbReference type="ChEBI" id="CHEBI:57540"/>
    </ligand>
</feature>
<feature type="binding site" evidence="1">
    <location>
        <position position="143"/>
    </location>
    <ligand>
        <name>NAD(+)</name>
        <dbReference type="ChEBI" id="CHEBI:57540"/>
    </ligand>
</feature>
<feature type="binding site" evidence="1">
    <location>
        <position position="152"/>
    </location>
    <ligand>
        <name>NAD(+)</name>
        <dbReference type="ChEBI" id="CHEBI:57540"/>
    </ligand>
</feature>
<feature type="binding site" evidence="1">
    <location>
        <begin position="170"/>
        <end position="173"/>
    </location>
    <ligand>
        <name>NAD(+)</name>
        <dbReference type="ChEBI" id="CHEBI:57540"/>
    </ligand>
</feature>
<feature type="binding site" evidence="1">
    <location>
        <position position="185"/>
    </location>
    <ligand>
        <name>Zn(2+)</name>
        <dbReference type="ChEBI" id="CHEBI:29105"/>
    </ligand>
</feature>
<feature type="binding site" evidence="1">
    <location>
        <position position="246"/>
    </location>
    <ligand>
        <name>Zn(2+)</name>
        <dbReference type="ChEBI" id="CHEBI:29105"/>
    </ligand>
</feature>
<feature type="binding site" evidence="1">
    <location>
        <position position="263"/>
    </location>
    <ligand>
        <name>Zn(2+)</name>
        <dbReference type="ChEBI" id="CHEBI:29105"/>
    </ligand>
</feature>
<dbReference type="EC" id="4.2.3.4" evidence="1"/>
<dbReference type="EMBL" id="AE001437">
    <property type="protein sequence ID" value="AAK78870.1"/>
    <property type="molecule type" value="Genomic_DNA"/>
</dbReference>
<dbReference type="PIR" id="C97010">
    <property type="entry name" value="C97010"/>
</dbReference>
<dbReference type="RefSeq" id="NP_347530.1">
    <property type="nucleotide sequence ID" value="NC_003030.1"/>
</dbReference>
<dbReference type="RefSeq" id="WP_010964212.1">
    <property type="nucleotide sequence ID" value="NC_003030.1"/>
</dbReference>
<dbReference type="SMR" id="Q97KM3"/>
<dbReference type="STRING" id="272562.CA_C0894"/>
<dbReference type="GeneID" id="44997404"/>
<dbReference type="KEGG" id="cac:CA_C0894"/>
<dbReference type="PATRIC" id="fig|272562.8.peg.1103"/>
<dbReference type="eggNOG" id="COG0337">
    <property type="taxonomic scope" value="Bacteria"/>
</dbReference>
<dbReference type="HOGENOM" id="CLU_001201_0_1_9"/>
<dbReference type="OrthoDB" id="9806583at2"/>
<dbReference type="UniPathway" id="UPA00053">
    <property type="reaction ID" value="UER00085"/>
</dbReference>
<dbReference type="Proteomes" id="UP000000814">
    <property type="component" value="Chromosome"/>
</dbReference>
<dbReference type="GO" id="GO:0005737">
    <property type="term" value="C:cytoplasm"/>
    <property type="evidence" value="ECO:0007669"/>
    <property type="project" value="UniProtKB-SubCell"/>
</dbReference>
<dbReference type="GO" id="GO:0003856">
    <property type="term" value="F:3-dehydroquinate synthase activity"/>
    <property type="evidence" value="ECO:0007669"/>
    <property type="project" value="UniProtKB-UniRule"/>
</dbReference>
<dbReference type="GO" id="GO:0046872">
    <property type="term" value="F:metal ion binding"/>
    <property type="evidence" value="ECO:0007669"/>
    <property type="project" value="UniProtKB-KW"/>
</dbReference>
<dbReference type="GO" id="GO:0000166">
    <property type="term" value="F:nucleotide binding"/>
    <property type="evidence" value="ECO:0007669"/>
    <property type="project" value="UniProtKB-KW"/>
</dbReference>
<dbReference type="GO" id="GO:0008652">
    <property type="term" value="P:amino acid biosynthetic process"/>
    <property type="evidence" value="ECO:0007669"/>
    <property type="project" value="UniProtKB-KW"/>
</dbReference>
<dbReference type="GO" id="GO:0009073">
    <property type="term" value="P:aromatic amino acid family biosynthetic process"/>
    <property type="evidence" value="ECO:0007669"/>
    <property type="project" value="UniProtKB-KW"/>
</dbReference>
<dbReference type="GO" id="GO:0009423">
    <property type="term" value="P:chorismate biosynthetic process"/>
    <property type="evidence" value="ECO:0007669"/>
    <property type="project" value="UniProtKB-UniRule"/>
</dbReference>
<dbReference type="CDD" id="cd08195">
    <property type="entry name" value="DHQS"/>
    <property type="match status" value="1"/>
</dbReference>
<dbReference type="FunFam" id="3.40.50.1970:FF:000007">
    <property type="entry name" value="Pentafunctional AROM polypeptide"/>
    <property type="match status" value="1"/>
</dbReference>
<dbReference type="Gene3D" id="3.40.50.1970">
    <property type="match status" value="1"/>
</dbReference>
<dbReference type="Gene3D" id="1.20.1090.10">
    <property type="entry name" value="Dehydroquinate synthase-like - alpha domain"/>
    <property type="match status" value="1"/>
</dbReference>
<dbReference type="HAMAP" id="MF_00110">
    <property type="entry name" value="DHQ_synthase"/>
    <property type="match status" value="1"/>
</dbReference>
<dbReference type="InterPro" id="IPR050071">
    <property type="entry name" value="Dehydroquinate_synthase"/>
</dbReference>
<dbReference type="InterPro" id="IPR016037">
    <property type="entry name" value="DHQ_synth_AroB"/>
</dbReference>
<dbReference type="InterPro" id="IPR030963">
    <property type="entry name" value="DHQ_synth_fam"/>
</dbReference>
<dbReference type="InterPro" id="IPR030960">
    <property type="entry name" value="DHQS/DOIS_N"/>
</dbReference>
<dbReference type="InterPro" id="IPR056179">
    <property type="entry name" value="DHQS_C"/>
</dbReference>
<dbReference type="NCBIfam" id="TIGR01357">
    <property type="entry name" value="aroB"/>
    <property type="match status" value="1"/>
</dbReference>
<dbReference type="PANTHER" id="PTHR43622">
    <property type="entry name" value="3-DEHYDROQUINATE SYNTHASE"/>
    <property type="match status" value="1"/>
</dbReference>
<dbReference type="PANTHER" id="PTHR43622:SF7">
    <property type="entry name" value="3-DEHYDROQUINATE SYNTHASE, CHLOROPLASTIC"/>
    <property type="match status" value="1"/>
</dbReference>
<dbReference type="Pfam" id="PF01761">
    <property type="entry name" value="DHQ_synthase"/>
    <property type="match status" value="1"/>
</dbReference>
<dbReference type="Pfam" id="PF24621">
    <property type="entry name" value="DHQS_C"/>
    <property type="match status" value="1"/>
</dbReference>
<dbReference type="PIRSF" id="PIRSF001455">
    <property type="entry name" value="DHQ_synth"/>
    <property type="match status" value="1"/>
</dbReference>
<dbReference type="SUPFAM" id="SSF56796">
    <property type="entry name" value="Dehydroquinate synthase-like"/>
    <property type="match status" value="1"/>
</dbReference>
<sequence>MKTLEMELGQNSYSIFIEKGIMNDIGKRISKLYSGEKIVLITDDNVNKFYGEKLEKNIKDFGYDVFKIVIKAGEKSKNIKTLTDIYSRLAEFRITRSDLIVTLGGGVVGDIGGFAAATYLRGISYIQIPTSLLAQIDSSIGGKVAVDLEQGKNLVGNFYQPKAVFIDPLFLKTLDIRFLHDGMGEVIKYGAIRDGELFKRLEEFKDDNELMDNIEYVIHACCRIKKQVVENDEKDNGERMILNFGHTIGHAVEEFFHYEKFTHGECVAYGMYSITKNSERLGITKEGTTEKLKNIIKKYSLPFNIDNLKNERIYEIAALDKKSRGKFINLVLLKDIGDCFIEKVESKETYKYLRVV</sequence>
<organism>
    <name type="scientific">Clostridium acetobutylicum (strain ATCC 824 / DSM 792 / JCM 1419 / IAM 19013 / LMG 5710 / NBRC 13948 / NRRL B-527 / VKM B-1787 / 2291 / W)</name>
    <dbReference type="NCBI Taxonomy" id="272562"/>
    <lineage>
        <taxon>Bacteria</taxon>
        <taxon>Bacillati</taxon>
        <taxon>Bacillota</taxon>
        <taxon>Clostridia</taxon>
        <taxon>Eubacteriales</taxon>
        <taxon>Clostridiaceae</taxon>
        <taxon>Clostridium</taxon>
    </lineage>
</organism>
<reference key="1">
    <citation type="journal article" date="2001" name="J. Bacteriol.">
        <title>Genome sequence and comparative analysis of the solvent-producing bacterium Clostridium acetobutylicum.</title>
        <authorList>
            <person name="Noelling J."/>
            <person name="Breton G."/>
            <person name="Omelchenko M.V."/>
            <person name="Makarova K.S."/>
            <person name="Zeng Q."/>
            <person name="Gibson R."/>
            <person name="Lee H.M."/>
            <person name="Dubois J."/>
            <person name="Qiu D."/>
            <person name="Hitti J."/>
            <person name="Wolf Y.I."/>
            <person name="Tatusov R.L."/>
            <person name="Sabathe F."/>
            <person name="Doucette-Stamm L.A."/>
            <person name="Soucaille P."/>
            <person name="Daly M.J."/>
            <person name="Bennett G.N."/>
            <person name="Koonin E.V."/>
            <person name="Smith D.R."/>
        </authorList>
    </citation>
    <scope>NUCLEOTIDE SEQUENCE [LARGE SCALE GENOMIC DNA]</scope>
    <source>
        <strain>ATCC 824 / DSM 792 / JCM 1419 / IAM 19013 / LMG 5710 / NBRC 13948 / NRRL B-527 / VKM B-1787 / 2291 / W</strain>
    </source>
</reference>
<accession>Q97KM3</accession>
<protein>
    <recommendedName>
        <fullName evidence="1">3-dehydroquinate synthase</fullName>
        <shortName evidence="1">DHQS</shortName>
        <ecNumber evidence="1">4.2.3.4</ecNumber>
    </recommendedName>
</protein>
<name>AROB_CLOAB</name>
<keyword id="KW-0028">Amino-acid biosynthesis</keyword>
<keyword id="KW-0057">Aromatic amino acid biosynthesis</keyword>
<keyword id="KW-0170">Cobalt</keyword>
<keyword id="KW-0963">Cytoplasm</keyword>
<keyword id="KW-0456">Lyase</keyword>
<keyword id="KW-0479">Metal-binding</keyword>
<keyword id="KW-0520">NAD</keyword>
<keyword id="KW-0547">Nucleotide-binding</keyword>
<keyword id="KW-1185">Reference proteome</keyword>
<keyword id="KW-0862">Zinc</keyword>
<comment type="function">
    <text evidence="1">Catalyzes the conversion of 3-deoxy-D-arabino-heptulosonate 7-phosphate (DAHP) to dehydroquinate (DHQ).</text>
</comment>
<comment type="catalytic activity">
    <reaction evidence="1">
        <text>7-phospho-2-dehydro-3-deoxy-D-arabino-heptonate = 3-dehydroquinate + phosphate</text>
        <dbReference type="Rhea" id="RHEA:21968"/>
        <dbReference type="ChEBI" id="CHEBI:32364"/>
        <dbReference type="ChEBI" id="CHEBI:43474"/>
        <dbReference type="ChEBI" id="CHEBI:58394"/>
        <dbReference type="EC" id="4.2.3.4"/>
    </reaction>
</comment>
<comment type="cofactor">
    <cofactor evidence="1">
        <name>NAD(+)</name>
        <dbReference type="ChEBI" id="CHEBI:57540"/>
    </cofactor>
</comment>
<comment type="cofactor">
    <cofactor evidence="1">
        <name>Co(2+)</name>
        <dbReference type="ChEBI" id="CHEBI:48828"/>
    </cofactor>
    <cofactor evidence="1">
        <name>Zn(2+)</name>
        <dbReference type="ChEBI" id="CHEBI:29105"/>
    </cofactor>
    <text evidence="1">Binds 1 divalent metal cation per subunit. Can use either Co(2+) or Zn(2+).</text>
</comment>
<comment type="pathway">
    <text evidence="1">Metabolic intermediate biosynthesis; chorismate biosynthesis; chorismate from D-erythrose 4-phosphate and phosphoenolpyruvate: step 2/7.</text>
</comment>
<comment type="subcellular location">
    <subcellularLocation>
        <location evidence="1">Cytoplasm</location>
    </subcellularLocation>
</comment>
<comment type="similarity">
    <text evidence="1">Belongs to the sugar phosphate cyclases superfamily. Dehydroquinate synthase family.</text>
</comment>
<gene>
    <name evidence="1" type="primary">aroB</name>
    <name type="ordered locus">CA_C0894</name>
</gene>
<evidence type="ECO:0000255" key="1">
    <source>
        <dbReference type="HAMAP-Rule" id="MF_00110"/>
    </source>
</evidence>